<protein>
    <recommendedName>
        <fullName>Zinc finger CCCH domain-containing protein 11A</fullName>
    </recommendedName>
</protein>
<comment type="function">
    <text evidence="4 5 6">Through its association with TREX complex components, may participate in the export and post-transcriptional coordination of selected mRNA transcripts, including those required to maintain the metabolic processes in embryonic cells (PubMed:22928037, PubMed:37356722). Binds RNA (PubMed:29610341, PubMed:37356722).</text>
</comment>
<comment type="function">
    <text evidence="5 6">(Microbial infection) Plays a role in efficient growth of several nuclear-replicating viruses such as HIV-1, influenza virus or herpes simplex virus 1/HHV-1. Required for efficient viral mRNA export (PubMed:29610341). May be required for proper polyadenylation of adenovirus type 5/HAdV-5 capsid mRNA (PubMed:37356722).</text>
</comment>
<comment type="subunit">
    <text evidence="4 6">Interacts with TREX complex components THOC2, DDX39 and POLDIP3; the interactions are ATP-dependent (PubMed:22928037). Interacts with PABPN1; this interaction retains ZC3H11A in nuclear speckles (PubMed:37356722). Interacts with KPNA3 (PubMed:37356722).</text>
</comment>
<comment type="interaction">
    <interactant intactId="EBI-748480">
        <id>O75152</id>
    </interactant>
    <interactant intactId="EBI-866480">
        <id>Q08050</id>
        <label>FOXM1</label>
    </interactant>
    <organismsDiffer>false</organismsDiffer>
    <experiments>2</experiments>
</comment>
<comment type="interaction">
    <interactant intactId="EBI-748480">
        <id>O75152</id>
    </interactant>
    <interactant intactId="EBI-744248">
        <id>P40692</id>
        <label>MLH1</label>
    </interactant>
    <organismsDiffer>false</organismsDiffer>
    <experiments>8</experiments>
</comment>
<comment type="subcellular location">
    <subcellularLocation>
        <location evidence="5">Nucleus</location>
    </subcellularLocation>
    <subcellularLocation>
        <location evidence="6">Nucleus speckle</location>
    </subcellularLocation>
    <text evidence="6">Retained in nuclear speckles though interaction with PABPN1.</text>
</comment>
<comment type="induction">
    <text evidence="5">By heat shock treatment.</text>
</comment>
<comment type="sequence caution" evidence="7">
    <conflict type="erroneous initiation">
        <sequence resource="EMBL-CDS" id="BAA31638"/>
    </conflict>
    <text>Extended N-terminus.</text>
</comment>
<comment type="sequence caution" evidence="7">
    <conflict type="miscellaneous discrepancy">
        <sequence resource="EMBL-CDS" id="CAH10553"/>
    </conflict>
    <text>Contaminating sequence. Potential poly-A sequence.</text>
</comment>
<name>ZC11A_HUMAN</name>
<accession>O75152</accession>
<accession>Q6AHY4</accession>
<accession>Q6AHY9</accession>
<accession>Q6AW79</accession>
<accession>Q6AWA1</accession>
<accession>Q6PJK4</accession>
<accession>Q86XZ7</accession>
<reference key="1">
    <citation type="journal article" date="1998" name="DNA Res.">
        <title>Prediction of the coding sequences of unidentified human genes. X. The complete sequences of 100 new cDNA clones from brain which can code for large proteins in vitro.</title>
        <authorList>
            <person name="Ishikawa K."/>
            <person name="Nagase T."/>
            <person name="Suyama M."/>
            <person name="Miyajima N."/>
            <person name="Tanaka A."/>
            <person name="Kotani H."/>
            <person name="Nomura N."/>
            <person name="Ohara O."/>
        </authorList>
    </citation>
    <scope>NUCLEOTIDE SEQUENCE [LARGE SCALE MRNA]</scope>
    <source>
        <tissue>Brain</tissue>
    </source>
</reference>
<reference key="2">
    <citation type="submission" date="2004-01" db="EMBL/GenBank/DDBJ databases">
        <authorList>
            <person name="Ohara O."/>
            <person name="Suyama M."/>
            <person name="Nagase T."/>
            <person name="Ishikawa K."/>
        </authorList>
    </citation>
    <scope>SEQUENCE REVISION</scope>
</reference>
<reference key="3">
    <citation type="journal article" date="2007" name="BMC Genomics">
        <title>The full-ORF clone resource of the German cDNA consortium.</title>
        <authorList>
            <person name="Bechtel S."/>
            <person name="Rosenfelder H."/>
            <person name="Duda A."/>
            <person name="Schmidt C.P."/>
            <person name="Ernst U."/>
            <person name="Wellenreuther R."/>
            <person name="Mehrle A."/>
            <person name="Schuster C."/>
            <person name="Bahr A."/>
            <person name="Bloecker H."/>
            <person name="Heubner D."/>
            <person name="Hoerlein A."/>
            <person name="Michel G."/>
            <person name="Wedler H."/>
            <person name="Koehrer K."/>
            <person name="Ottenwaelder B."/>
            <person name="Poustka A."/>
            <person name="Wiemann S."/>
            <person name="Schupp I."/>
        </authorList>
    </citation>
    <scope>NUCLEOTIDE SEQUENCE [LARGE SCALE MRNA]</scope>
    <source>
        <tissue>Fetal kidney</tissue>
        <tissue>Retina</tissue>
    </source>
</reference>
<reference key="4">
    <citation type="journal article" date="2004" name="Genome Res.">
        <title>The status, quality, and expansion of the NIH full-length cDNA project: the Mammalian Gene Collection (MGC).</title>
        <authorList>
            <consortium name="The MGC Project Team"/>
        </authorList>
    </citation>
    <scope>NUCLEOTIDE SEQUENCE [LARGE SCALE MRNA]</scope>
    <source>
        <tissue>Kidney</tissue>
        <tissue>Placenta</tissue>
    </source>
</reference>
<reference key="5">
    <citation type="journal article" date="2006" name="Cell">
        <title>Global, in vivo, and site-specific phosphorylation dynamics in signaling networks.</title>
        <authorList>
            <person name="Olsen J.V."/>
            <person name="Blagoev B."/>
            <person name="Gnad F."/>
            <person name="Macek B."/>
            <person name="Kumar C."/>
            <person name="Mortensen P."/>
            <person name="Mann M."/>
        </authorList>
    </citation>
    <scope>IDENTIFICATION BY MASS SPECTROMETRY [LARGE SCALE ANALYSIS]</scope>
    <source>
        <tissue>Cervix carcinoma</tissue>
    </source>
</reference>
<reference key="6">
    <citation type="journal article" date="2006" name="Nat. Biotechnol.">
        <title>A probability-based approach for high-throughput protein phosphorylation analysis and site localization.</title>
        <authorList>
            <person name="Beausoleil S.A."/>
            <person name="Villen J."/>
            <person name="Gerber S.A."/>
            <person name="Rush J."/>
            <person name="Gygi S.P."/>
        </authorList>
    </citation>
    <scope>PHOSPHORYLATION [LARGE SCALE ANALYSIS] AT SER-108</scope>
    <scope>IDENTIFICATION BY MASS SPECTROMETRY [LARGE SCALE ANALYSIS]</scope>
    <source>
        <tissue>Cervix carcinoma</tissue>
    </source>
</reference>
<reference key="7">
    <citation type="journal article" date="2008" name="Proc. Natl. Acad. Sci. U.S.A.">
        <title>A quantitative atlas of mitotic phosphorylation.</title>
        <authorList>
            <person name="Dephoure N."/>
            <person name="Zhou C."/>
            <person name="Villen J."/>
            <person name="Beausoleil S.A."/>
            <person name="Bakalarski C.E."/>
            <person name="Elledge S.J."/>
            <person name="Gygi S.P."/>
        </authorList>
    </citation>
    <scope>PHOSPHORYLATION [LARGE SCALE ANALYSIS] AT SER-108; SER-132; SER-171; SER-290 AND THR-321</scope>
    <scope>IDENTIFICATION BY MASS SPECTROMETRY [LARGE SCALE ANALYSIS]</scope>
    <source>
        <tissue>Cervix carcinoma</tissue>
    </source>
</reference>
<reference key="8">
    <citation type="journal article" date="2009" name="Anal. Chem.">
        <title>Lys-N and trypsin cover complementary parts of the phosphoproteome in a refined SCX-based approach.</title>
        <authorList>
            <person name="Gauci S."/>
            <person name="Helbig A.O."/>
            <person name="Slijper M."/>
            <person name="Krijgsveld J."/>
            <person name="Heck A.J."/>
            <person name="Mohammed S."/>
        </authorList>
    </citation>
    <scope>IDENTIFICATION BY MASS SPECTROMETRY [LARGE SCALE ANALYSIS]</scope>
</reference>
<reference key="9">
    <citation type="journal article" date="2009" name="Sci. Signal.">
        <title>Quantitative phosphoproteomic analysis of T cell receptor signaling reveals system-wide modulation of protein-protein interactions.</title>
        <authorList>
            <person name="Mayya V."/>
            <person name="Lundgren D.H."/>
            <person name="Hwang S.-I."/>
            <person name="Rezaul K."/>
            <person name="Wu L."/>
            <person name="Eng J.K."/>
            <person name="Rodionov V."/>
            <person name="Han D.K."/>
        </authorList>
    </citation>
    <scope>PHOSPHORYLATION [LARGE SCALE ANALYSIS] AT SER-108</scope>
    <scope>IDENTIFICATION BY MASS SPECTROMETRY [LARGE SCALE ANALYSIS]</scope>
    <source>
        <tissue>Leukemic T-cell</tissue>
    </source>
</reference>
<reference key="10">
    <citation type="journal article" date="2010" name="Genes Dev.">
        <title>ATP is required for interactions between UAP56 and two conserved mRNA export proteins, Aly and CIP29, to assemble the TREX complex.</title>
        <authorList>
            <person name="Dufu K."/>
            <person name="Livingstone M.J."/>
            <person name="Seebacher J."/>
            <person name="Gygi S.P."/>
            <person name="Wilson S.A."/>
            <person name="Reed R."/>
        </authorList>
    </citation>
    <scope>ASSOCIATION WITH THE TREX COMPLEX</scope>
</reference>
<reference key="11">
    <citation type="journal article" date="2010" name="Sci. Signal.">
        <title>Quantitative phosphoproteomics reveals widespread full phosphorylation site occupancy during mitosis.</title>
        <authorList>
            <person name="Olsen J.V."/>
            <person name="Vermeulen M."/>
            <person name="Santamaria A."/>
            <person name="Kumar C."/>
            <person name="Miller M.L."/>
            <person name="Jensen L.J."/>
            <person name="Gnad F."/>
            <person name="Cox J."/>
            <person name="Jensen T.S."/>
            <person name="Nigg E.A."/>
            <person name="Brunak S."/>
            <person name="Mann M."/>
        </authorList>
    </citation>
    <scope>PHOSPHORYLATION [LARGE SCALE ANALYSIS] AT SER-108 AND SER-132</scope>
    <scope>IDENTIFICATION BY MASS SPECTROMETRY [LARGE SCALE ANALYSIS]</scope>
    <source>
        <tissue>Cervix carcinoma</tissue>
    </source>
</reference>
<reference key="12">
    <citation type="journal article" date="2011" name="BMC Syst. Biol.">
        <title>Initial characterization of the human central proteome.</title>
        <authorList>
            <person name="Burkard T.R."/>
            <person name="Planyavsky M."/>
            <person name="Kaupe I."/>
            <person name="Breitwieser F.P."/>
            <person name="Buerckstuemmer T."/>
            <person name="Bennett K.L."/>
            <person name="Superti-Furga G."/>
            <person name="Colinge J."/>
        </authorList>
    </citation>
    <scope>IDENTIFICATION BY MASS SPECTROMETRY [LARGE SCALE ANALYSIS]</scope>
</reference>
<reference key="13">
    <citation type="journal article" date="2011" name="Sci. Signal.">
        <title>System-wide temporal characterization of the proteome and phosphoproteome of human embryonic stem cell differentiation.</title>
        <authorList>
            <person name="Rigbolt K.T."/>
            <person name="Prokhorova T.A."/>
            <person name="Akimov V."/>
            <person name="Henningsen J."/>
            <person name="Johansen P.T."/>
            <person name="Kratchmarova I."/>
            <person name="Kassem M."/>
            <person name="Mann M."/>
            <person name="Olsen J.V."/>
            <person name="Blagoev B."/>
        </authorList>
    </citation>
    <scope>PHOSPHORYLATION [LARGE SCALE ANALYSIS] AT SER-108</scope>
    <scope>IDENTIFICATION BY MASS SPECTROMETRY [LARGE SCALE ANALYSIS]</scope>
</reference>
<reference key="14">
    <citation type="journal article" date="2012" name="PLoS ONE">
        <title>The proteins PDIP3 and ZC11A associate with the human TREX complex in an ATP-dependent manner and function in mRNA export.</title>
        <authorList>
            <person name="Folco E.G."/>
            <person name="Lee C.S."/>
            <person name="Dufu K."/>
            <person name="Yamazaki T."/>
            <person name="Reed R."/>
        </authorList>
    </citation>
    <scope>FUNCTION</scope>
    <scope>SUBCELLULAR LOCATION</scope>
    <scope>INTERACTION WITH THOC2; DDX39B AND POLDIP3</scope>
    <scope>ASSOCIATION WITH THE TREX COMPLEX</scope>
</reference>
<reference key="15">
    <citation type="journal article" date="2013" name="J. Proteome Res.">
        <title>Toward a comprehensive characterization of a human cancer cell phosphoproteome.</title>
        <authorList>
            <person name="Zhou H."/>
            <person name="Di Palma S."/>
            <person name="Preisinger C."/>
            <person name="Peng M."/>
            <person name="Polat A.N."/>
            <person name="Heck A.J."/>
            <person name="Mohammed S."/>
        </authorList>
    </citation>
    <scope>PHOSPHORYLATION [LARGE SCALE ANALYSIS] AT SER-108; SER-132; SER-171; SER-290; THR-321 AND SER-370</scope>
    <scope>IDENTIFICATION BY MASS SPECTROMETRY [LARGE SCALE ANALYSIS]</scope>
    <source>
        <tissue>Cervix carcinoma</tissue>
        <tissue>Erythroleukemia</tissue>
    </source>
</reference>
<reference key="16">
    <citation type="journal article" date="2014" name="J. Proteomics">
        <title>An enzyme assisted RP-RPLC approach for in-depth analysis of human liver phosphoproteome.</title>
        <authorList>
            <person name="Bian Y."/>
            <person name="Song C."/>
            <person name="Cheng K."/>
            <person name="Dong M."/>
            <person name="Wang F."/>
            <person name="Huang J."/>
            <person name="Sun D."/>
            <person name="Wang L."/>
            <person name="Ye M."/>
            <person name="Zou H."/>
        </authorList>
    </citation>
    <scope>PHOSPHORYLATION [LARGE SCALE ANALYSIS] AT SER-149 AND SER-290</scope>
    <scope>IDENTIFICATION BY MASS SPECTROMETRY [LARGE SCALE ANALYSIS]</scope>
    <source>
        <tissue>Liver</tissue>
    </source>
</reference>
<reference key="17">
    <citation type="journal article" date="2014" name="Nat. Struct. Mol. Biol.">
        <title>Uncovering global SUMOylation signaling networks in a site-specific manner.</title>
        <authorList>
            <person name="Hendriks I.A."/>
            <person name="D'Souza R.C."/>
            <person name="Yang B."/>
            <person name="Verlaan-de Vries M."/>
            <person name="Mann M."/>
            <person name="Vertegaal A.C."/>
        </authorList>
    </citation>
    <scope>SUMOYLATION [LARGE SCALE ANALYSIS] AT LYS-478</scope>
    <scope>IDENTIFICATION BY MASS SPECTROMETRY [LARGE SCALE ANALYSIS]</scope>
</reference>
<reference key="18">
    <citation type="journal article" date="2017" name="Nat. Struct. Mol. Biol.">
        <title>Site-specific mapping of the human SUMO proteome reveals co-modification with phosphorylation.</title>
        <authorList>
            <person name="Hendriks I.A."/>
            <person name="Lyon D."/>
            <person name="Young C."/>
            <person name="Jensen L.J."/>
            <person name="Vertegaal A.C."/>
            <person name="Nielsen M.L."/>
        </authorList>
    </citation>
    <scope>SUMOYLATION [LARGE SCALE ANALYSIS] AT LYS-114; LYS-124; LYS-140; LYS-478 AND LYS-619</scope>
    <scope>IDENTIFICATION BY MASS SPECTROMETRY [LARGE SCALE ANALYSIS]</scope>
</reference>
<reference key="19">
    <citation type="journal article" date="2018" name="Proc. Natl. Acad. Sci. U.S.A.">
        <title>Multiple nuclear-replicating viruses require the stress-induced protein ZC3H11A for efficient growth.</title>
        <authorList>
            <person name="Younis S."/>
            <person name="Kamel W."/>
            <person name="Falkeborn T."/>
            <person name="Wang H."/>
            <person name="Yu D."/>
            <person name="Daniels R."/>
            <person name="Essand M."/>
            <person name="Hinkula J."/>
            <person name="Akusjaervi G."/>
            <person name="Andersson L."/>
        </authorList>
    </citation>
    <scope>FUNCTION</scope>
    <scope>FUNCTION (MICROBIAL INFECTION)</scope>
    <scope>SUBCELLULAR LOCATION</scope>
    <scope>INDUCTION BY HEAT SHOCK</scope>
</reference>
<reference key="20">
    <citation type="journal article" date="2023" name="J. Biol. Chem.">
        <title>The RNA-binding protein ZC3H11A interacts with the nuclear poly(A)-binding protein PABPN1 and alters polyadenylation of viral transcripts.</title>
        <authorList>
            <person name="Kases K."/>
            <person name="Schubert E."/>
            <person name="Hajikhezri Z."/>
            <person name="Larsson M."/>
            <person name="Devi P."/>
            <person name="Darweesh M."/>
            <person name="Andersson L."/>
            <person name="Akusjaervi G."/>
            <person name="Punga T."/>
            <person name="Younis S."/>
        </authorList>
    </citation>
    <scope>FUNCTION (MICROBIAL INFECTION)</scope>
    <scope>INTERACTION WITH KPNA3 AND PABPN1</scope>
    <scope>SUBCELLULAR LOCATION</scope>
    <scope>MUTAGENESIS OF CYS-8; CYS-37; CYS-66; 286-LYS--ARG-301 AND 661-VAL--LYS-699</scope>
</reference>
<keyword id="KW-0175">Coiled coil</keyword>
<keyword id="KW-1017">Isopeptide bond</keyword>
<keyword id="KW-0479">Metal-binding</keyword>
<keyword id="KW-0509">mRNA transport</keyword>
<keyword id="KW-0539">Nucleus</keyword>
<keyword id="KW-0597">Phosphoprotein</keyword>
<keyword id="KW-1267">Proteomics identification</keyword>
<keyword id="KW-1185">Reference proteome</keyword>
<keyword id="KW-0677">Repeat</keyword>
<keyword id="KW-0813">Transport</keyword>
<keyword id="KW-0832">Ubl conjugation</keyword>
<keyword id="KW-0862">Zinc</keyword>
<keyword id="KW-0863">Zinc-finger</keyword>
<evidence type="ECO:0000255" key="1"/>
<evidence type="ECO:0000255" key="2">
    <source>
        <dbReference type="PROSITE-ProRule" id="PRU00723"/>
    </source>
</evidence>
<evidence type="ECO:0000256" key="3">
    <source>
        <dbReference type="SAM" id="MobiDB-lite"/>
    </source>
</evidence>
<evidence type="ECO:0000269" key="4">
    <source>
    </source>
</evidence>
<evidence type="ECO:0000269" key="5">
    <source>
    </source>
</evidence>
<evidence type="ECO:0000269" key="6">
    <source>
    </source>
</evidence>
<evidence type="ECO:0000305" key="7"/>
<evidence type="ECO:0007744" key="8">
    <source>
    </source>
</evidence>
<evidence type="ECO:0007744" key="9">
    <source>
    </source>
</evidence>
<evidence type="ECO:0007744" key="10">
    <source>
    </source>
</evidence>
<evidence type="ECO:0007744" key="11">
    <source>
    </source>
</evidence>
<evidence type="ECO:0007744" key="12">
    <source>
    </source>
</evidence>
<evidence type="ECO:0007744" key="13">
    <source>
    </source>
</evidence>
<evidence type="ECO:0007744" key="14">
    <source>
    </source>
</evidence>
<evidence type="ECO:0007744" key="15">
    <source>
    </source>
</evidence>
<evidence type="ECO:0007744" key="16">
    <source>
    </source>
</evidence>
<feature type="chain" id="PRO_0000213905" description="Zinc finger CCCH domain-containing protein 11A">
    <location>
        <begin position="1"/>
        <end position="810"/>
    </location>
</feature>
<feature type="zinc finger region" description="C3H1-type 1" evidence="2">
    <location>
        <begin position="2"/>
        <end position="29"/>
    </location>
</feature>
<feature type="zinc finger region" description="C3H1-type 2" evidence="2">
    <location>
        <begin position="31"/>
        <end position="57"/>
    </location>
</feature>
<feature type="zinc finger region" description="C3H1-type 3" evidence="2">
    <location>
        <begin position="60"/>
        <end position="86"/>
    </location>
</feature>
<feature type="region of interest" description="Disordered" evidence="3">
    <location>
        <begin position="139"/>
        <end position="194"/>
    </location>
</feature>
<feature type="region of interest" description="Disordered" evidence="3">
    <location>
        <begin position="223"/>
        <end position="258"/>
    </location>
</feature>
<feature type="region of interest" description="Disordered" evidence="3">
    <location>
        <begin position="285"/>
        <end position="351"/>
    </location>
</feature>
<feature type="region of interest" description="Disordered" evidence="3">
    <location>
        <begin position="367"/>
        <end position="432"/>
    </location>
</feature>
<feature type="region of interest" description="Disordered" evidence="3">
    <location>
        <begin position="482"/>
        <end position="549"/>
    </location>
</feature>
<feature type="region of interest" description="Disordered" evidence="3">
    <location>
        <begin position="715"/>
        <end position="768"/>
    </location>
</feature>
<feature type="coiled-coil region" evidence="1">
    <location>
        <begin position="362"/>
        <end position="423"/>
    </location>
</feature>
<feature type="compositionally biased region" description="Acidic residues" evidence="3">
    <location>
        <begin position="160"/>
        <end position="175"/>
    </location>
</feature>
<feature type="compositionally biased region" description="Basic and acidic residues" evidence="3">
    <location>
        <begin position="309"/>
        <end position="322"/>
    </location>
</feature>
<feature type="compositionally biased region" description="Basic and acidic residues" evidence="3">
    <location>
        <begin position="367"/>
        <end position="390"/>
    </location>
</feature>
<feature type="compositionally biased region" description="Polar residues" evidence="3">
    <location>
        <begin position="391"/>
        <end position="402"/>
    </location>
</feature>
<feature type="compositionally biased region" description="Basic and acidic residues" evidence="3">
    <location>
        <begin position="417"/>
        <end position="432"/>
    </location>
</feature>
<feature type="compositionally biased region" description="Low complexity" evidence="3">
    <location>
        <begin position="486"/>
        <end position="498"/>
    </location>
</feature>
<feature type="compositionally biased region" description="Low complexity" evidence="3">
    <location>
        <begin position="729"/>
        <end position="748"/>
    </location>
</feature>
<feature type="compositionally biased region" description="Polar residues" evidence="3">
    <location>
        <begin position="749"/>
        <end position="762"/>
    </location>
</feature>
<feature type="modified residue" description="Phosphoserine" evidence="8 9 10 11 12 13">
    <location>
        <position position="108"/>
    </location>
</feature>
<feature type="modified residue" description="Phosphoserine" evidence="9 11 13">
    <location>
        <position position="132"/>
    </location>
</feature>
<feature type="modified residue" description="Phosphoserine" evidence="14">
    <location>
        <position position="149"/>
    </location>
</feature>
<feature type="modified residue" description="Phosphoserine" evidence="9 13">
    <location>
        <position position="171"/>
    </location>
</feature>
<feature type="modified residue" description="Phosphoserine" evidence="9 13 14">
    <location>
        <position position="290"/>
    </location>
</feature>
<feature type="modified residue" description="Phosphothreonine" evidence="9 13">
    <location>
        <position position="321"/>
    </location>
</feature>
<feature type="modified residue" description="Phosphoserine" evidence="13">
    <location>
        <position position="370"/>
    </location>
</feature>
<feature type="cross-link" description="Glycyl lysine isopeptide (Lys-Gly) (interchain with G-Cter in SUMO2)" evidence="16">
    <location>
        <position position="114"/>
    </location>
</feature>
<feature type="cross-link" description="Glycyl lysine isopeptide (Lys-Gly) (interchain with G-Cter in SUMO2)" evidence="16">
    <location>
        <position position="124"/>
    </location>
</feature>
<feature type="cross-link" description="Glycyl lysine isopeptide (Lys-Gly) (interchain with G-Cter in SUMO2)" evidence="16">
    <location>
        <position position="140"/>
    </location>
</feature>
<feature type="cross-link" description="Glycyl lysine isopeptide (Lys-Gly) (interchain with G-Cter in SUMO2)" evidence="15 16">
    <location>
        <position position="478"/>
    </location>
</feature>
<feature type="cross-link" description="Glycyl lysine isopeptide (Lys-Gly) (interchain with G-Cter in SUMO2)" evidence="16">
    <location>
        <position position="619"/>
    </location>
</feature>
<feature type="sequence variant" id="VAR_052967" description="In dbSNP:rs11240604.">
    <original>T</original>
    <variation>N</variation>
    <location>
        <position position="640"/>
    </location>
</feature>
<feature type="mutagenesis site" description="Loss of interaction with PABPN1, loss of localization to nuclear speckles and strong reduction in the binding to viral transcripts. Loss of interaction with PABPN1, loss of localization to nuclear speckles and reduced binding to viral transcripts; when associated with A-37 and A-66." evidence="6">
    <original>C</original>
    <variation>A</variation>
    <location>
        <position position="8"/>
    </location>
</feature>
<feature type="mutagenesis site" description="Reduced interaction with PABPN1, decreased localization to nuclear speckles and reduced binding to viral transcripts. Loss of interaction with PABPN1, loss of localization to nuclear speckles and reduced binding to viral transcripts; when associated with A-8 and A-66." evidence="6">
    <original>C</original>
    <variation>A</variation>
    <location>
        <position position="37"/>
    </location>
</feature>
<feature type="mutagenesis site" description="Loss of interaction with PABPN1, loss of localization to nuclear speckles and reduced binding to viral transcripts. Loss of interaction with PABPN1, loss of localization to nuclear speckles and reduced binding to viral transcripts; when associated with A-8 and A-37." evidence="6">
    <original>C</original>
    <variation>A</variation>
    <location>
        <position position="66"/>
    </location>
</feature>
<feature type="mutagenesis site" description="No effect on nuclear localization. Loss of nuclear localization; when associated with 661-V--K-699 del." evidence="6">
    <original>KRKFSAGGDSDPPLKR</original>
    <variation>AAAFSAGGDSDPPLAA</variation>
    <location>
        <begin position="286"/>
        <end position="301"/>
    </location>
</feature>
<feature type="mutagenesis site" description="No effect on nuclear localization. Loss of nuclear localization; when associated with 286-A--A-301." evidence="6">
    <location>
        <begin position="661"/>
        <end position="699"/>
    </location>
</feature>
<feature type="sequence conflict" description="In Ref. 3; CAH10553." evidence="7" ref="3">
    <original>C</original>
    <variation>Y</variation>
    <location>
        <position position="80"/>
    </location>
</feature>
<feature type="sequence conflict" description="In Ref. 3; CAH10530." evidence="7" ref="3">
    <original>P</original>
    <variation>L</variation>
    <location>
        <position position="246"/>
    </location>
</feature>
<feature type="sequence conflict" description="In Ref. 3; CAH10525." evidence="7" ref="3">
    <original>L</original>
    <variation>P</variation>
    <location>
        <position position="266"/>
    </location>
</feature>
<feature type="sequence conflict" description="In Ref. 3; CAH10530." evidence="7" ref="3">
    <original>R</original>
    <variation>G</variation>
    <location>
        <position position="277"/>
    </location>
</feature>
<feature type="sequence conflict" description="In Ref. 3; CAH10525." evidence="7" ref="3">
    <original>V</original>
    <variation>G</variation>
    <location>
        <position position="409"/>
    </location>
</feature>
<feature type="sequence conflict" description="In Ref. 3; CAH10525." evidence="7" ref="3">
    <original>E</original>
    <variation>K</variation>
    <location>
        <position position="412"/>
    </location>
</feature>
<feature type="sequence conflict" description="In Ref. 3; CAH10566." evidence="7" ref="3">
    <original>S</original>
    <variation>P</variation>
    <location>
        <position position="616"/>
    </location>
</feature>
<gene>
    <name type="primary">ZC3H11A</name>
    <name type="synonym">KIAA0663</name>
    <name type="synonym">ZC3HDC11A</name>
</gene>
<dbReference type="EMBL" id="AB014563">
    <property type="protein sequence ID" value="BAA31638.2"/>
    <property type="status" value="ALT_INIT"/>
    <property type="molecule type" value="mRNA"/>
</dbReference>
<dbReference type="EMBL" id="CR627439">
    <property type="protein sequence ID" value="CAH10525.1"/>
    <property type="molecule type" value="mRNA"/>
</dbReference>
<dbReference type="EMBL" id="CR627446">
    <property type="protein sequence ID" value="CAH10530.1"/>
    <property type="molecule type" value="mRNA"/>
</dbReference>
<dbReference type="EMBL" id="BX648271">
    <property type="protein sequence ID" value="CAH10553.1"/>
    <property type="status" value="ALT_SEQ"/>
    <property type="molecule type" value="mRNA"/>
</dbReference>
<dbReference type="EMBL" id="BX649148">
    <property type="protein sequence ID" value="CAH10566.1"/>
    <property type="molecule type" value="mRNA"/>
</dbReference>
<dbReference type="EMBL" id="BC014268">
    <property type="protein sequence ID" value="AAH14268.1"/>
    <property type="molecule type" value="mRNA"/>
</dbReference>
<dbReference type="CCDS" id="CCDS30978.1"/>
<dbReference type="PIR" id="T00368">
    <property type="entry name" value="T00368"/>
</dbReference>
<dbReference type="RefSeq" id="NP_001306167.1">
    <property type="nucleotide sequence ID" value="NM_001319238.2"/>
</dbReference>
<dbReference type="RefSeq" id="NP_001306168.1">
    <property type="nucleotide sequence ID" value="NM_001319239.2"/>
</dbReference>
<dbReference type="RefSeq" id="NP_001337190.1">
    <property type="nucleotide sequence ID" value="NM_001350261.2"/>
</dbReference>
<dbReference type="RefSeq" id="NP_001337191.1">
    <property type="nucleotide sequence ID" value="NM_001350262.2"/>
</dbReference>
<dbReference type="RefSeq" id="NP_001337192.1">
    <property type="nucleotide sequence ID" value="NM_001350263.2"/>
</dbReference>
<dbReference type="RefSeq" id="NP_001337193.1">
    <property type="nucleotide sequence ID" value="NM_001350264.2"/>
</dbReference>
<dbReference type="RefSeq" id="NP_001363263.1">
    <property type="nucleotide sequence ID" value="NM_001376334.1"/>
</dbReference>
<dbReference type="RefSeq" id="NP_001363264.1">
    <property type="nucleotide sequence ID" value="NM_001376335.1"/>
</dbReference>
<dbReference type="RefSeq" id="NP_001363265.1">
    <property type="nucleotide sequence ID" value="NM_001376336.1"/>
</dbReference>
<dbReference type="RefSeq" id="NP_001363266.1">
    <property type="nucleotide sequence ID" value="NM_001376337.1"/>
</dbReference>
<dbReference type="RefSeq" id="NP_001363267.1">
    <property type="nucleotide sequence ID" value="NM_001376338.1"/>
</dbReference>
<dbReference type="RefSeq" id="NP_001363268.1">
    <property type="nucleotide sequence ID" value="NM_001376339.1"/>
</dbReference>
<dbReference type="RefSeq" id="NP_001363269.1">
    <property type="nucleotide sequence ID" value="NM_001376340.1"/>
</dbReference>
<dbReference type="RefSeq" id="NP_001363270.1">
    <property type="nucleotide sequence ID" value="NM_001376341.1"/>
</dbReference>
<dbReference type="RefSeq" id="NP_001363271.1">
    <property type="nucleotide sequence ID" value="NM_001376342.1"/>
</dbReference>
<dbReference type="RefSeq" id="NP_001363272.1">
    <property type="nucleotide sequence ID" value="NM_001376343.1"/>
</dbReference>
<dbReference type="RefSeq" id="NP_001363273.1">
    <property type="nucleotide sequence ID" value="NM_001376344.1"/>
</dbReference>
<dbReference type="RefSeq" id="NP_001363274.1">
    <property type="nucleotide sequence ID" value="NM_001376345.1"/>
</dbReference>
<dbReference type="RefSeq" id="NP_001363275.1">
    <property type="nucleotide sequence ID" value="NM_001376346.1"/>
</dbReference>
<dbReference type="RefSeq" id="NP_001363276.1">
    <property type="nucleotide sequence ID" value="NM_001376347.1"/>
</dbReference>
<dbReference type="RefSeq" id="NP_001363277.1">
    <property type="nucleotide sequence ID" value="NM_001376348.1"/>
</dbReference>
<dbReference type="RefSeq" id="NP_001363278.1">
    <property type="nucleotide sequence ID" value="NM_001376349.1"/>
</dbReference>
<dbReference type="RefSeq" id="NP_001363279.1">
    <property type="nucleotide sequence ID" value="NM_001376350.1"/>
</dbReference>
<dbReference type="RefSeq" id="NP_001363280.1">
    <property type="nucleotide sequence ID" value="NM_001376351.1"/>
</dbReference>
<dbReference type="RefSeq" id="NP_001363281.1">
    <property type="nucleotide sequence ID" value="NM_001376352.1"/>
</dbReference>
<dbReference type="RefSeq" id="NP_001363282.1">
    <property type="nucleotide sequence ID" value="NM_001376353.1"/>
</dbReference>
<dbReference type="RefSeq" id="NP_001363283.1">
    <property type="nucleotide sequence ID" value="NM_001376354.1"/>
</dbReference>
<dbReference type="RefSeq" id="NP_001363284.1">
    <property type="nucleotide sequence ID" value="NM_001376355.1"/>
</dbReference>
<dbReference type="RefSeq" id="NP_001363285.1">
    <property type="nucleotide sequence ID" value="NM_001376356.1"/>
</dbReference>
<dbReference type="RefSeq" id="NP_001363286.1">
    <property type="nucleotide sequence ID" value="NM_001376357.1"/>
</dbReference>
<dbReference type="RefSeq" id="NP_001363287.1">
    <property type="nucleotide sequence ID" value="NM_001376358.1"/>
</dbReference>
<dbReference type="RefSeq" id="NP_001363288.1">
    <property type="nucleotide sequence ID" value="NM_001376359.1"/>
</dbReference>
<dbReference type="RefSeq" id="NP_001363289.1">
    <property type="nucleotide sequence ID" value="NM_001376360.1"/>
</dbReference>
<dbReference type="RefSeq" id="NP_001363290.1">
    <property type="nucleotide sequence ID" value="NM_001376361.1"/>
</dbReference>
<dbReference type="RefSeq" id="NP_001363291.1">
    <property type="nucleotide sequence ID" value="NM_001376362.1"/>
</dbReference>
<dbReference type="RefSeq" id="NP_001363292.1">
    <property type="nucleotide sequence ID" value="NM_001376363.1"/>
</dbReference>
<dbReference type="RefSeq" id="NP_001363293.1">
    <property type="nucleotide sequence ID" value="NM_001376364.1"/>
</dbReference>
<dbReference type="RefSeq" id="NP_001363294.1">
    <property type="nucleotide sequence ID" value="NM_001376365.1"/>
</dbReference>
<dbReference type="RefSeq" id="NP_055642.3">
    <property type="nucleotide sequence ID" value="NM_014827.6"/>
</dbReference>
<dbReference type="RefSeq" id="XP_005245700.1">
    <property type="nucleotide sequence ID" value="XM_005245643.2"/>
</dbReference>
<dbReference type="RefSeq" id="XP_005245701.1">
    <property type="nucleotide sequence ID" value="XM_005245644.3"/>
</dbReference>
<dbReference type="RefSeq" id="XP_006711736.1">
    <property type="nucleotide sequence ID" value="XM_006711673.2"/>
</dbReference>
<dbReference type="RefSeq" id="XP_011508501.1">
    <property type="nucleotide sequence ID" value="XM_011510199.1"/>
</dbReference>
<dbReference type="RefSeq" id="XP_011508502.1">
    <property type="nucleotide sequence ID" value="XM_011510200.1"/>
</dbReference>
<dbReference type="RefSeq" id="XP_011508503.1">
    <property type="nucleotide sequence ID" value="XM_011510201.1"/>
</dbReference>
<dbReference type="RefSeq" id="XP_011508504.1">
    <property type="nucleotide sequence ID" value="XM_011510202.1"/>
</dbReference>
<dbReference type="RefSeq" id="XP_016858445.1">
    <property type="nucleotide sequence ID" value="XM_017002956.1"/>
</dbReference>
<dbReference type="RefSeq" id="XP_016858446.1">
    <property type="nucleotide sequence ID" value="XM_017002957.1"/>
</dbReference>
<dbReference type="RefSeq" id="XP_016858447.1">
    <property type="nucleotide sequence ID" value="XM_017002958.1"/>
</dbReference>
<dbReference type="RefSeq" id="XP_016858448.1">
    <property type="nucleotide sequence ID" value="XM_017002959.1"/>
</dbReference>
<dbReference type="BioGRID" id="115208">
    <property type="interactions" value="218"/>
</dbReference>
<dbReference type="ComplexPortal" id="CPX-2488">
    <property type="entry name" value="TREX transcription-export complex, DX39B variant"/>
</dbReference>
<dbReference type="ComplexPortal" id="CPX-7261">
    <property type="entry name" value="TREX transcription-export complex, DX39A variant"/>
</dbReference>
<dbReference type="FunCoup" id="O75152">
    <property type="interactions" value="1970"/>
</dbReference>
<dbReference type="IntAct" id="O75152">
    <property type="interactions" value="833"/>
</dbReference>
<dbReference type="MINT" id="O75152"/>
<dbReference type="STRING" id="9606.ENSP00000491830"/>
<dbReference type="GlyGen" id="O75152">
    <property type="glycosylation" value="7 sites, 1 O-linked glycan (6 sites)"/>
</dbReference>
<dbReference type="iPTMnet" id="O75152"/>
<dbReference type="MetOSite" id="O75152"/>
<dbReference type="PhosphoSitePlus" id="O75152"/>
<dbReference type="SwissPalm" id="O75152"/>
<dbReference type="BioMuta" id="ZC3H11A"/>
<dbReference type="CPTAC" id="CPTAC-1020"/>
<dbReference type="jPOST" id="O75152"/>
<dbReference type="MassIVE" id="O75152"/>
<dbReference type="PaxDb" id="9606-ENSP00000438527"/>
<dbReference type="PeptideAtlas" id="O75152"/>
<dbReference type="ProteomicsDB" id="49818"/>
<dbReference type="Pumba" id="O75152"/>
<dbReference type="Antibodypedia" id="34548">
    <property type="antibodies" value="145 antibodies from 25 providers"/>
</dbReference>
<dbReference type="DNASU" id="9877"/>
<dbReference type="Ensembl" id="ENST00000332127.8">
    <property type="protein sequence ID" value="ENSP00000333253.4"/>
    <property type="gene ID" value="ENSG00000058673.17"/>
</dbReference>
<dbReference type="Ensembl" id="ENST00000367210.3">
    <property type="protein sequence ID" value="ENSP00000356179.1"/>
    <property type="gene ID" value="ENSG00000058673.17"/>
</dbReference>
<dbReference type="Ensembl" id="ENST00000367212.7">
    <property type="protein sequence ID" value="ENSP00000356181.3"/>
    <property type="gene ID" value="ENSG00000058673.17"/>
</dbReference>
<dbReference type="Ensembl" id="ENST00000367214.5">
    <property type="protein sequence ID" value="ENSP00000356183.1"/>
    <property type="gene ID" value="ENSG00000058673.17"/>
</dbReference>
<dbReference type="Ensembl" id="ENST00000639812.1">
    <property type="protein sequence ID" value="ENSP00000491830.1"/>
    <property type="gene ID" value="ENSG00000058673.17"/>
</dbReference>
<dbReference type="GeneID" id="9877"/>
<dbReference type="KEGG" id="hsa:9877"/>
<dbReference type="MANE-Select" id="ENST00000367210.3">
    <property type="protein sequence ID" value="ENSP00000356179.1"/>
    <property type="RefSeq nucleotide sequence ID" value="NM_001376342.1"/>
    <property type="RefSeq protein sequence ID" value="NP_001363271.1"/>
</dbReference>
<dbReference type="UCSC" id="uc001hac.4">
    <property type="organism name" value="human"/>
</dbReference>
<dbReference type="AGR" id="HGNC:29093"/>
<dbReference type="CTD" id="9877"/>
<dbReference type="DisGeNET" id="9877"/>
<dbReference type="GeneCards" id="ZC3H11A"/>
<dbReference type="HGNC" id="HGNC:29093">
    <property type="gene designation" value="ZC3H11A"/>
</dbReference>
<dbReference type="HPA" id="ENSG00000058673">
    <property type="expression patterns" value="Low tissue specificity"/>
</dbReference>
<dbReference type="MIM" id="613513">
    <property type="type" value="gene"/>
</dbReference>
<dbReference type="neXtProt" id="NX_O75152"/>
<dbReference type="OpenTargets" id="ENSG00000058673"/>
<dbReference type="PharmGKB" id="PA142670535"/>
<dbReference type="VEuPathDB" id="HostDB:ENSG00000058673"/>
<dbReference type="eggNOG" id="KOG4791">
    <property type="taxonomic scope" value="Eukaryota"/>
</dbReference>
<dbReference type="GeneTree" id="ENSGT00920000149095"/>
<dbReference type="HOGENOM" id="CLU_019514_1_0_1"/>
<dbReference type="InParanoid" id="O75152"/>
<dbReference type="OMA" id="NVRPSVM"/>
<dbReference type="OrthoDB" id="5395350at2759"/>
<dbReference type="PAN-GO" id="O75152">
    <property type="GO annotations" value="2 GO annotations based on evolutionary models"/>
</dbReference>
<dbReference type="PhylomeDB" id="O75152"/>
<dbReference type="TreeFam" id="TF335608"/>
<dbReference type="PathwayCommons" id="O75152"/>
<dbReference type="Reactome" id="R-HSA-159236">
    <property type="pathway name" value="Transport of Mature mRNA derived from an Intron-Containing Transcript"/>
</dbReference>
<dbReference type="Reactome" id="R-HSA-72187">
    <property type="pathway name" value="mRNA 3'-end processing"/>
</dbReference>
<dbReference type="Reactome" id="R-HSA-73856">
    <property type="pathway name" value="RNA Polymerase II Transcription Termination"/>
</dbReference>
<dbReference type="SignaLink" id="O75152"/>
<dbReference type="SIGNOR" id="O75152"/>
<dbReference type="BioGRID-ORCS" id="9877">
    <property type="hits" value="66 hits in 1157 CRISPR screens"/>
</dbReference>
<dbReference type="CD-CODE" id="804901D1">
    <property type="entry name" value="Nuclear speckle"/>
</dbReference>
<dbReference type="CD-CODE" id="DEE660B4">
    <property type="entry name" value="Stress granule"/>
</dbReference>
<dbReference type="ChiTaRS" id="ZC3H11A">
    <property type="organism name" value="human"/>
</dbReference>
<dbReference type="GeneWiki" id="ZC3H11A"/>
<dbReference type="GenomeRNAi" id="9877"/>
<dbReference type="Pharos" id="O75152">
    <property type="development level" value="Tbio"/>
</dbReference>
<dbReference type="PRO" id="PR:O75152"/>
<dbReference type="Proteomes" id="UP000005640">
    <property type="component" value="Chromosome 1"/>
</dbReference>
<dbReference type="RNAct" id="O75152">
    <property type="molecule type" value="protein"/>
</dbReference>
<dbReference type="Bgee" id="ENSG00000058673">
    <property type="expression patterns" value="Expressed in corpus callosum and 99 other cell types or tissues"/>
</dbReference>
<dbReference type="ExpressionAtlas" id="O75152">
    <property type="expression patterns" value="baseline and differential"/>
</dbReference>
<dbReference type="GO" id="GO:0016607">
    <property type="term" value="C:nuclear speck"/>
    <property type="evidence" value="ECO:0007669"/>
    <property type="project" value="UniProtKB-SubCell"/>
</dbReference>
<dbReference type="GO" id="GO:0005654">
    <property type="term" value="C:nucleoplasm"/>
    <property type="evidence" value="ECO:0000304"/>
    <property type="project" value="Reactome"/>
</dbReference>
<dbReference type="GO" id="GO:0003723">
    <property type="term" value="F:RNA binding"/>
    <property type="evidence" value="ECO:0007005"/>
    <property type="project" value="UniProtKB"/>
</dbReference>
<dbReference type="GO" id="GO:0008270">
    <property type="term" value="F:zinc ion binding"/>
    <property type="evidence" value="ECO:0007669"/>
    <property type="project" value="UniProtKB-KW"/>
</dbReference>
<dbReference type="GO" id="GO:0016973">
    <property type="term" value="P:poly(A)+ mRNA export from nucleus"/>
    <property type="evidence" value="ECO:0000315"/>
    <property type="project" value="UniProtKB"/>
</dbReference>
<dbReference type="FunFam" id="4.10.1000.10:FF:000024">
    <property type="entry name" value="Zinc finger CCCH domain-containing protein 11A"/>
    <property type="match status" value="1"/>
</dbReference>
<dbReference type="Gene3D" id="3.30.1370.210">
    <property type="match status" value="1"/>
</dbReference>
<dbReference type="InterPro" id="IPR041686">
    <property type="entry name" value="Znf-CCCH_3"/>
</dbReference>
<dbReference type="InterPro" id="IPR000571">
    <property type="entry name" value="Znf_CCCH"/>
</dbReference>
<dbReference type="PANTHER" id="PTHR15725:SF2">
    <property type="entry name" value="ZINC FINGER CCCH DOMAIN-CONTAINING PROTEIN 11A"/>
    <property type="match status" value="1"/>
</dbReference>
<dbReference type="PANTHER" id="PTHR15725">
    <property type="entry name" value="ZN-FINGER, C-X8-C-X5-C-X3-H TYPE-CONTAINING"/>
    <property type="match status" value="1"/>
</dbReference>
<dbReference type="Pfam" id="PF15663">
    <property type="entry name" value="zf-CCCH_3"/>
    <property type="match status" value="1"/>
</dbReference>
<dbReference type="SMART" id="SM00356">
    <property type="entry name" value="ZnF_C3H1"/>
    <property type="match status" value="3"/>
</dbReference>
<dbReference type="PROSITE" id="PS50103">
    <property type="entry name" value="ZF_C3H1"/>
    <property type="match status" value="2"/>
</dbReference>
<sequence>MPNQGEDCYFFFYSTCTKGDSCPFRHCEAAIGNETVCTLWQEGRCFRQVCRFRHMEIDKKRSEIPCYWENQPTGCQKLNCAFHHNRGRYVDGLFLPPSKTVLPTVPESPEEEVKASQLSVQQNKLSVQSNPSPQLRSVMKVESSENVPSPTHPPVVINAADDDEDDDDQFSEEGDETKTPTLQPTPEVHNGLRVTSVRKPAVNIKQGECLNFGIKTLEEIKSKKMKEKSKKQGEGSSGVSSLLLHPEPVPGPEKENVRTVVRTVTLSTKQGEEPLVRLSLTERLGKRKFSAGGDSDPPLKRSLAQRLGKKVEAPETNIDKTPKKAQVSKSLKERLGMSADPDNEDATDKVNKVGEIHVKTLEEILLERASQKRGELQTKLKTEGPSKTDDSTSGARSSSTIRIKTFSEVLAEKKHRQQEAERQKSKKDTTCIKLKIDSEIKKTVVLPPIVASRGQSEEPAGKTKSMQEVHIKTLEEIKLEKALRVQQSSESSTSSPSQHEATPGARRLLRITKRTGMKEEKNLQEGNEVDSQSSIRTEAKEASGETTGVDITKIQVKRCETMREKHMQKQQEREKSVLTPLRGDVASCNTQVAEKPVLTAVPGITRHLTKRLPTKSSQKVEVETSGIGDSLLNVKCAAQTLEKRGKAKPKVNVKPSVVKVVSSPKLAPKRKAVEMHAAVIAAVKPLSSSSVLQEPPAKKAAVAVVPLVSEDKSVTVPEAENPRDSLVLPPTQSSSDSSPPEVSGPSSSQMSMKTRRLSSASTGKPPLSVEDDFEKLIWEISGGKLEAEIDLDPGKDEDDLLLELSEMIDS</sequence>
<proteinExistence type="evidence at protein level"/>
<organism>
    <name type="scientific">Homo sapiens</name>
    <name type="common">Human</name>
    <dbReference type="NCBI Taxonomy" id="9606"/>
    <lineage>
        <taxon>Eukaryota</taxon>
        <taxon>Metazoa</taxon>
        <taxon>Chordata</taxon>
        <taxon>Craniata</taxon>
        <taxon>Vertebrata</taxon>
        <taxon>Euteleostomi</taxon>
        <taxon>Mammalia</taxon>
        <taxon>Eutheria</taxon>
        <taxon>Euarchontoglires</taxon>
        <taxon>Primates</taxon>
        <taxon>Haplorrhini</taxon>
        <taxon>Catarrhini</taxon>
        <taxon>Hominidae</taxon>
        <taxon>Homo</taxon>
    </lineage>
</organism>